<protein>
    <recommendedName>
        <fullName evidence="1">DNA mismatch repair protein MutL</fullName>
    </recommendedName>
</protein>
<dbReference type="EMBL" id="CP000390">
    <property type="protein sequence ID" value="ABG61845.1"/>
    <property type="molecule type" value="Genomic_DNA"/>
</dbReference>
<dbReference type="SMR" id="Q11L80"/>
<dbReference type="STRING" id="266779.Meso_0441"/>
<dbReference type="KEGG" id="mes:Meso_0441"/>
<dbReference type="eggNOG" id="COG0323">
    <property type="taxonomic scope" value="Bacteria"/>
</dbReference>
<dbReference type="HOGENOM" id="CLU_004131_4_2_5"/>
<dbReference type="OrthoDB" id="9763467at2"/>
<dbReference type="GO" id="GO:0032300">
    <property type="term" value="C:mismatch repair complex"/>
    <property type="evidence" value="ECO:0007669"/>
    <property type="project" value="InterPro"/>
</dbReference>
<dbReference type="GO" id="GO:0005524">
    <property type="term" value="F:ATP binding"/>
    <property type="evidence" value="ECO:0007669"/>
    <property type="project" value="InterPro"/>
</dbReference>
<dbReference type="GO" id="GO:0016887">
    <property type="term" value="F:ATP hydrolysis activity"/>
    <property type="evidence" value="ECO:0007669"/>
    <property type="project" value="InterPro"/>
</dbReference>
<dbReference type="GO" id="GO:0140664">
    <property type="term" value="F:ATP-dependent DNA damage sensor activity"/>
    <property type="evidence" value="ECO:0007669"/>
    <property type="project" value="InterPro"/>
</dbReference>
<dbReference type="GO" id="GO:0030983">
    <property type="term" value="F:mismatched DNA binding"/>
    <property type="evidence" value="ECO:0007669"/>
    <property type="project" value="InterPro"/>
</dbReference>
<dbReference type="GO" id="GO:0006298">
    <property type="term" value="P:mismatch repair"/>
    <property type="evidence" value="ECO:0007669"/>
    <property type="project" value="UniProtKB-UniRule"/>
</dbReference>
<dbReference type="CDD" id="cd16926">
    <property type="entry name" value="HATPase_MutL-MLH-PMS-like"/>
    <property type="match status" value="1"/>
</dbReference>
<dbReference type="CDD" id="cd00782">
    <property type="entry name" value="MutL_Trans"/>
    <property type="match status" value="1"/>
</dbReference>
<dbReference type="FunFam" id="3.30.565.10:FF:000003">
    <property type="entry name" value="DNA mismatch repair endonuclease MutL"/>
    <property type="match status" value="1"/>
</dbReference>
<dbReference type="Gene3D" id="3.30.230.10">
    <property type="match status" value="1"/>
</dbReference>
<dbReference type="Gene3D" id="3.30.565.10">
    <property type="entry name" value="Histidine kinase-like ATPase, C-terminal domain"/>
    <property type="match status" value="1"/>
</dbReference>
<dbReference type="Gene3D" id="3.30.1540.20">
    <property type="entry name" value="MutL, C-terminal domain, dimerisation subdomain"/>
    <property type="match status" value="1"/>
</dbReference>
<dbReference type="Gene3D" id="3.30.1370.100">
    <property type="entry name" value="MutL, C-terminal domain, regulatory subdomain"/>
    <property type="match status" value="1"/>
</dbReference>
<dbReference type="HAMAP" id="MF_00149">
    <property type="entry name" value="DNA_mis_repair"/>
    <property type="match status" value="1"/>
</dbReference>
<dbReference type="InterPro" id="IPR014762">
    <property type="entry name" value="DNA_mismatch_repair_CS"/>
</dbReference>
<dbReference type="InterPro" id="IPR020667">
    <property type="entry name" value="DNA_mismatch_repair_MutL"/>
</dbReference>
<dbReference type="InterPro" id="IPR013507">
    <property type="entry name" value="DNA_mismatch_S5_2-like"/>
</dbReference>
<dbReference type="InterPro" id="IPR036890">
    <property type="entry name" value="HATPase_C_sf"/>
</dbReference>
<dbReference type="InterPro" id="IPR002099">
    <property type="entry name" value="MutL/Mlh/PMS"/>
</dbReference>
<dbReference type="InterPro" id="IPR038973">
    <property type="entry name" value="MutL/Mlh/Pms-like"/>
</dbReference>
<dbReference type="InterPro" id="IPR014790">
    <property type="entry name" value="MutL_C"/>
</dbReference>
<dbReference type="InterPro" id="IPR042120">
    <property type="entry name" value="MutL_C_dimsub"/>
</dbReference>
<dbReference type="InterPro" id="IPR042121">
    <property type="entry name" value="MutL_C_regsub"/>
</dbReference>
<dbReference type="InterPro" id="IPR037198">
    <property type="entry name" value="MutL_C_sf"/>
</dbReference>
<dbReference type="InterPro" id="IPR020568">
    <property type="entry name" value="Ribosomal_Su5_D2-typ_SF"/>
</dbReference>
<dbReference type="InterPro" id="IPR014721">
    <property type="entry name" value="Ribsml_uS5_D2-typ_fold_subgr"/>
</dbReference>
<dbReference type="NCBIfam" id="TIGR00585">
    <property type="entry name" value="mutl"/>
    <property type="match status" value="1"/>
</dbReference>
<dbReference type="NCBIfam" id="NF000953">
    <property type="entry name" value="PRK00095.2-4"/>
    <property type="match status" value="1"/>
</dbReference>
<dbReference type="PANTHER" id="PTHR10073">
    <property type="entry name" value="DNA MISMATCH REPAIR PROTEIN MLH, PMS, MUTL"/>
    <property type="match status" value="1"/>
</dbReference>
<dbReference type="PANTHER" id="PTHR10073:SF12">
    <property type="entry name" value="DNA MISMATCH REPAIR PROTEIN MLH1"/>
    <property type="match status" value="1"/>
</dbReference>
<dbReference type="Pfam" id="PF01119">
    <property type="entry name" value="DNA_mis_repair"/>
    <property type="match status" value="1"/>
</dbReference>
<dbReference type="Pfam" id="PF02518">
    <property type="entry name" value="HATPase_c"/>
    <property type="match status" value="1"/>
</dbReference>
<dbReference type="Pfam" id="PF08676">
    <property type="entry name" value="MutL_C"/>
    <property type="match status" value="1"/>
</dbReference>
<dbReference type="SMART" id="SM01340">
    <property type="entry name" value="DNA_mis_repair"/>
    <property type="match status" value="1"/>
</dbReference>
<dbReference type="SMART" id="SM00853">
    <property type="entry name" value="MutL_C"/>
    <property type="match status" value="1"/>
</dbReference>
<dbReference type="SUPFAM" id="SSF55874">
    <property type="entry name" value="ATPase domain of HSP90 chaperone/DNA topoisomerase II/histidine kinase"/>
    <property type="match status" value="1"/>
</dbReference>
<dbReference type="SUPFAM" id="SSF118116">
    <property type="entry name" value="DNA mismatch repair protein MutL"/>
    <property type="match status" value="1"/>
</dbReference>
<dbReference type="SUPFAM" id="SSF54211">
    <property type="entry name" value="Ribosomal protein S5 domain 2-like"/>
    <property type="match status" value="1"/>
</dbReference>
<dbReference type="PROSITE" id="PS00058">
    <property type="entry name" value="DNA_MISMATCH_REPAIR_1"/>
    <property type="match status" value="1"/>
</dbReference>
<keyword id="KW-0227">DNA damage</keyword>
<keyword id="KW-0234">DNA repair</keyword>
<evidence type="ECO:0000255" key="1">
    <source>
        <dbReference type="HAMAP-Rule" id="MF_00149"/>
    </source>
</evidence>
<evidence type="ECO:0000256" key="2">
    <source>
        <dbReference type="SAM" id="MobiDB-lite"/>
    </source>
</evidence>
<reference key="1">
    <citation type="submission" date="2006-06" db="EMBL/GenBank/DDBJ databases">
        <title>Complete sequence of chromosome of Mesorhizobium sp. BNC1.</title>
        <authorList>
            <consortium name="US DOE Joint Genome Institute"/>
            <person name="Copeland A."/>
            <person name="Lucas S."/>
            <person name="Lapidus A."/>
            <person name="Barry K."/>
            <person name="Detter J.C."/>
            <person name="Glavina del Rio T."/>
            <person name="Hammon N."/>
            <person name="Israni S."/>
            <person name="Dalin E."/>
            <person name="Tice H."/>
            <person name="Pitluck S."/>
            <person name="Chertkov O."/>
            <person name="Brettin T."/>
            <person name="Bruce D."/>
            <person name="Han C."/>
            <person name="Tapia R."/>
            <person name="Gilna P."/>
            <person name="Schmutz J."/>
            <person name="Larimer F."/>
            <person name="Land M."/>
            <person name="Hauser L."/>
            <person name="Kyrpides N."/>
            <person name="Mikhailova N."/>
            <person name="Richardson P."/>
        </authorList>
    </citation>
    <scope>NUCLEOTIDE SEQUENCE [LARGE SCALE GENOMIC DNA]</scope>
    <source>
        <strain>BNC1</strain>
    </source>
</reference>
<sequence length="620" mass="66072">MPIRALADIIINQIAAGEVIERPASVVKELVENALDAGAKRIEVATAGGGLNLIRVIDDGGGIPPEELPLAVARHCTSKLTSDIHDIRTLGFRGEALPSIGSVGRLTLRSRTPDADGGAEITVDGGKASAVKPVAANRGTTVEVRDLFFATPARLKFMKSERAEAAAITEVVKRIALAFPAVRFMLSGTDRTSTELPAVSADGDGLLRRLGQIIGKDFAENALPIDAEREGVFLTGYASIPSFTRGNALAQFAYVNGRPVRDKLIAGAIRGAYMDALPRDRHAVTALFISLDPALVDVNVHPAKADVRFRDPGLVRGLIVGAIRQALEGAGVRAATTGAAAMLQAFRVPEGPSRANGANDFTGRPFSGTERPRGGWSMELSPSRPLEDAFPPAANGFAEAQQVVFDIGSVVSADARAGTLEALSDLVGRPLGAARAQVHENYIVAQTEDSLVIVDQHAAHERLVYEALKDAIHSKPLPSQMLLMPEIVDLPEEDAERLCAHAEFLARLGFGVERFGPGAICVRETPSMLGEVDIAALIRDLADEIADNDTANSLKKRIDHIAATMACHGSIRSGRRLKPEEMNALLRQMEATPGSGTCNHGRPTYIELKLADIERLFGRR</sequence>
<comment type="function">
    <text evidence="1">This protein is involved in the repair of mismatches in DNA. It is required for dam-dependent methyl-directed DNA mismatch repair. May act as a 'molecular matchmaker', a protein that promotes the formation of a stable complex between two or more DNA-binding proteins in an ATP-dependent manner without itself being part of a final effector complex.</text>
</comment>
<comment type="similarity">
    <text evidence="1">Belongs to the DNA mismatch repair MutL/HexB family.</text>
</comment>
<feature type="chain" id="PRO_1000010042" description="DNA mismatch repair protein MutL">
    <location>
        <begin position="1"/>
        <end position="620"/>
    </location>
</feature>
<feature type="region of interest" description="Disordered" evidence="2">
    <location>
        <begin position="353"/>
        <end position="375"/>
    </location>
</feature>
<accession>Q11L80</accession>
<gene>
    <name evidence="1" type="primary">mutL</name>
    <name type="ordered locus">Meso_0441</name>
</gene>
<proteinExistence type="inferred from homology"/>
<organism>
    <name type="scientific">Chelativorans sp. (strain BNC1)</name>
    <dbReference type="NCBI Taxonomy" id="266779"/>
    <lineage>
        <taxon>Bacteria</taxon>
        <taxon>Pseudomonadati</taxon>
        <taxon>Pseudomonadota</taxon>
        <taxon>Alphaproteobacteria</taxon>
        <taxon>Hyphomicrobiales</taxon>
        <taxon>Phyllobacteriaceae</taxon>
        <taxon>Chelativorans</taxon>
    </lineage>
</organism>
<name>MUTL_CHESB</name>